<gene>
    <name type="primary">ypmT</name>
    <name type="ordered locus">BSU21720</name>
</gene>
<reference key="1">
    <citation type="journal article" date="1996" name="Microbiology">
        <title>Organization of the Bacillus subtilis 168 chromosome between kdg and the attachment site of the SP beta prophage: use of long accurate PCR and yeast artificial chromosomes for sequencing.</title>
        <authorList>
            <person name="Capuano V."/>
            <person name="Galleron N."/>
            <person name="Pujic P."/>
            <person name="Sorokin A."/>
            <person name="Ehrlich S.D."/>
        </authorList>
    </citation>
    <scope>NUCLEOTIDE SEQUENCE [GENOMIC DNA]</scope>
    <source>
        <strain>168 / Marburg / ATCC 6051 / DSM 10 / JCM 1465 / NBRC 13719 / NCIMB 3610 / NRRL NRS-744 / VKM B-501</strain>
    </source>
</reference>
<reference key="2">
    <citation type="journal article" date="1997" name="Nature">
        <title>The complete genome sequence of the Gram-positive bacterium Bacillus subtilis.</title>
        <authorList>
            <person name="Kunst F."/>
            <person name="Ogasawara N."/>
            <person name="Moszer I."/>
            <person name="Albertini A.M."/>
            <person name="Alloni G."/>
            <person name="Azevedo V."/>
            <person name="Bertero M.G."/>
            <person name="Bessieres P."/>
            <person name="Bolotin A."/>
            <person name="Borchert S."/>
            <person name="Borriss R."/>
            <person name="Boursier L."/>
            <person name="Brans A."/>
            <person name="Braun M."/>
            <person name="Brignell S.C."/>
            <person name="Bron S."/>
            <person name="Brouillet S."/>
            <person name="Bruschi C.V."/>
            <person name="Caldwell B."/>
            <person name="Capuano V."/>
            <person name="Carter N.M."/>
            <person name="Choi S.-K."/>
            <person name="Codani J.-J."/>
            <person name="Connerton I.F."/>
            <person name="Cummings N.J."/>
            <person name="Daniel R.A."/>
            <person name="Denizot F."/>
            <person name="Devine K.M."/>
            <person name="Duesterhoeft A."/>
            <person name="Ehrlich S.D."/>
            <person name="Emmerson P.T."/>
            <person name="Entian K.-D."/>
            <person name="Errington J."/>
            <person name="Fabret C."/>
            <person name="Ferrari E."/>
            <person name="Foulger D."/>
            <person name="Fritz C."/>
            <person name="Fujita M."/>
            <person name="Fujita Y."/>
            <person name="Fuma S."/>
            <person name="Galizzi A."/>
            <person name="Galleron N."/>
            <person name="Ghim S.-Y."/>
            <person name="Glaser P."/>
            <person name="Goffeau A."/>
            <person name="Golightly E.J."/>
            <person name="Grandi G."/>
            <person name="Guiseppi G."/>
            <person name="Guy B.J."/>
            <person name="Haga K."/>
            <person name="Haiech J."/>
            <person name="Harwood C.R."/>
            <person name="Henaut A."/>
            <person name="Hilbert H."/>
            <person name="Holsappel S."/>
            <person name="Hosono S."/>
            <person name="Hullo M.-F."/>
            <person name="Itaya M."/>
            <person name="Jones L.-M."/>
            <person name="Joris B."/>
            <person name="Karamata D."/>
            <person name="Kasahara Y."/>
            <person name="Klaerr-Blanchard M."/>
            <person name="Klein C."/>
            <person name="Kobayashi Y."/>
            <person name="Koetter P."/>
            <person name="Koningstein G."/>
            <person name="Krogh S."/>
            <person name="Kumano M."/>
            <person name="Kurita K."/>
            <person name="Lapidus A."/>
            <person name="Lardinois S."/>
            <person name="Lauber J."/>
            <person name="Lazarevic V."/>
            <person name="Lee S.-M."/>
            <person name="Levine A."/>
            <person name="Liu H."/>
            <person name="Masuda S."/>
            <person name="Mauel C."/>
            <person name="Medigue C."/>
            <person name="Medina N."/>
            <person name="Mellado R.P."/>
            <person name="Mizuno M."/>
            <person name="Moestl D."/>
            <person name="Nakai S."/>
            <person name="Noback M."/>
            <person name="Noone D."/>
            <person name="O'Reilly M."/>
            <person name="Ogawa K."/>
            <person name="Ogiwara A."/>
            <person name="Oudega B."/>
            <person name="Park S.-H."/>
            <person name="Parro V."/>
            <person name="Pohl T.M."/>
            <person name="Portetelle D."/>
            <person name="Porwollik S."/>
            <person name="Prescott A.M."/>
            <person name="Presecan E."/>
            <person name="Pujic P."/>
            <person name="Purnelle B."/>
            <person name="Rapoport G."/>
            <person name="Rey M."/>
            <person name="Reynolds S."/>
            <person name="Rieger M."/>
            <person name="Rivolta C."/>
            <person name="Rocha E."/>
            <person name="Roche B."/>
            <person name="Rose M."/>
            <person name="Sadaie Y."/>
            <person name="Sato T."/>
            <person name="Scanlan E."/>
            <person name="Schleich S."/>
            <person name="Schroeter R."/>
            <person name="Scoffone F."/>
            <person name="Sekiguchi J."/>
            <person name="Sekowska A."/>
            <person name="Seror S.J."/>
            <person name="Serror P."/>
            <person name="Shin B.-S."/>
            <person name="Soldo B."/>
            <person name="Sorokin A."/>
            <person name="Tacconi E."/>
            <person name="Takagi T."/>
            <person name="Takahashi H."/>
            <person name="Takemaru K."/>
            <person name="Takeuchi M."/>
            <person name="Tamakoshi A."/>
            <person name="Tanaka T."/>
            <person name="Terpstra P."/>
            <person name="Tognoni A."/>
            <person name="Tosato V."/>
            <person name="Uchiyama S."/>
            <person name="Vandenbol M."/>
            <person name="Vannier F."/>
            <person name="Vassarotti A."/>
            <person name="Viari A."/>
            <person name="Wambutt R."/>
            <person name="Wedler E."/>
            <person name="Wedler H."/>
            <person name="Weitzenegger T."/>
            <person name="Winters P."/>
            <person name="Wipat A."/>
            <person name="Yamamoto H."/>
            <person name="Yamane K."/>
            <person name="Yasumoto K."/>
            <person name="Yata K."/>
            <person name="Yoshida K."/>
            <person name="Yoshikawa H.-F."/>
            <person name="Zumstein E."/>
            <person name="Yoshikawa H."/>
            <person name="Danchin A."/>
        </authorList>
    </citation>
    <scope>NUCLEOTIDE SEQUENCE [LARGE SCALE GENOMIC DNA]</scope>
    <source>
        <strain>168</strain>
    </source>
</reference>
<accession>P54180</accession>
<proteinExistence type="predicted"/>
<organism>
    <name type="scientific">Bacillus subtilis (strain 168)</name>
    <dbReference type="NCBI Taxonomy" id="224308"/>
    <lineage>
        <taxon>Bacteria</taxon>
        <taxon>Bacillati</taxon>
        <taxon>Bacillota</taxon>
        <taxon>Bacilli</taxon>
        <taxon>Bacillales</taxon>
        <taxon>Bacillaceae</taxon>
        <taxon>Bacillus</taxon>
    </lineage>
</organism>
<comment type="subcellular location">
    <subcellularLocation>
        <location evidence="2">Cell membrane</location>
        <topology evidence="2">Multi-pass membrane protein</topology>
    </subcellularLocation>
</comment>
<sequence>MKRIYQYFSLLSFTFSLYFGWLAYHHLAAEDMDQMYLNVSYCALFLSVMVFTFGMRDRKKTDKS</sequence>
<feature type="chain" id="PRO_0000049714" description="Uncharacterized protein YpmT">
    <location>
        <begin position="1"/>
        <end position="64"/>
    </location>
</feature>
<feature type="transmembrane region" description="Helical" evidence="1">
    <location>
        <begin position="4"/>
        <end position="24"/>
    </location>
</feature>
<feature type="transmembrane region" description="Helical" evidence="1">
    <location>
        <begin position="35"/>
        <end position="55"/>
    </location>
</feature>
<keyword id="KW-1003">Cell membrane</keyword>
<keyword id="KW-0472">Membrane</keyword>
<keyword id="KW-1185">Reference proteome</keyword>
<keyword id="KW-0812">Transmembrane</keyword>
<keyword id="KW-1133">Transmembrane helix</keyword>
<evidence type="ECO:0000255" key="1"/>
<evidence type="ECO:0000305" key="2"/>
<dbReference type="EMBL" id="L77246">
    <property type="protein sequence ID" value="AAA96644.1"/>
    <property type="molecule type" value="Genomic_DNA"/>
</dbReference>
<dbReference type="EMBL" id="AL009126">
    <property type="protein sequence ID" value="CAB14090.1"/>
    <property type="molecule type" value="Genomic_DNA"/>
</dbReference>
<dbReference type="PIR" id="C69939">
    <property type="entry name" value="C69939"/>
</dbReference>
<dbReference type="RefSeq" id="NP_390055.1">
    <property type="nucleotide sequence ID" value="NC_000964.3"/>
</dbReference>
<dbReference type="RefSeq" id="WP_003230808.1">
    <property type="nucleotide sequence ID" value="NZ_OZ025638.1"/>
</dbReference>
<dbReference type="SMR" id="P54180"/>
<dbReference type="FunCoup" id="P54180">
    <property type="interactions" value="27"/>
</dbReference>
<dbReference type="STRING" id="224308.BSU21720"/>
<dbReference type="PaxDb" id="224308-BSU21720"/>
<dbReference type="EnsemblBacteria" id="CAB14090">
    <property type="protein sequence ID" value="CAB14090"/>
    <property type="gene ID" value="BSU_21720"/>
</dbReference>
<dbReference type="GeneID" id="939101"/>
<dbReference type="KEGG" id="bsu:BSU21720"/>
<dbReference type="PATRIC" id="fig|224308.179.peg.2373"/>
<dbReference type="eggNOG" id="ENOG5030CYZ">
    <property type="taxonomic scope" value="Bacteria"/>
</dbReference>
<dbReference type="InParanoid" id="P54180"/>
<dbReference type="OrthoDB" id="2884427at2"/>
<dbReference type="BioCyc" id="BSUB:BSU21720-MONOMER"/>
<dbReference type="Proteomes" id="UP000001570">
    <property type="component" value="Chromosome"/>
</dbReference>
<dbReference type="GO" id="GO:0005886">
    <property type="term" value="C:plasma membrane"/>
    <property type="evidence" value="ECO:0007669"/>
    <property type="project" value="UniProtKB-SubCell"/>
</dbReference>
<dbReference type="InterPro" id="IPR035403">
    <property type="entry name" value="YmpT-like"/>
</dbReference>
<dbReference type="Pfam" id="PF17431">
    <property type="entry name" value="YpmT"/>
    <property type="match status" value="1"/>
</dbReference>
<name>YPMT_BACSU</name>
<protein>
    <recommendedName>
        <fullName>Uncharacterized protein YpmT</fullName>
    </recommendedName>
</protein>